<evidence type="ECO:0000255" key="1">
    <source>
        <dbReference type="HAMAP-Rule" id="MF_00537"/>
    </source>
</evidence>
<evidence type="ECO:0000305" key="2"/>
<comment type="function">
    <text evidence="1">Binds 16S rRNA, required for the assembly of 30S particles and may also be responsible for determining the conformation of the 16S rRNA at the A site.</text>
</comment>
<comment type="subunit">
    <text evidence="1">Part of the 30S ribosomal subunit. Contacts proteins S3 and S10.</text>
</comment>
<comment type="similarity">
    <text evidence="1">Belongs to the universal ribosomal protein uS14 family.</text>
</comment>
<proteinExistence type="inferred from homology"/>
<organism>
    <name type="scientific">Neisseria gonorrhoeae (strain ATCC 700825 / FA 1090)</name>
    <dbReference type="NCBI Taxonomy" id="242231"/>
    <lineage>
        <taxon>Bacteria</taxon>
        <taxon>Pseudomonadati</taxon>
        <taxon>Pseudomonadota</taxon>
        <taxon>Betaproteobacteria</taxon>
        <taxon>Neisseriales</taxon>
        <taxon>Neisseriaceae</taxon>
        <taxon>Neisseria</taxon>
    </lineage>
</organism>
<feature type="chain" id="PRO_1000128460" description="Small ribosomal subunit protein uS14">
    <location>
        <begin position="1"/>
        <end position="101"/>
    </location>
</feature>
<protein>
    <recommendedName>
        <fullName evidence="1">Small ribosomal subunit protein uS14</fullName>
    </recommendedName>
    <alternativeName>
        <fullName evidence="2">30S ribosomal protein S14</fullName>
    </alternativeName>
</protein>
<name>RS14_NEIG1</name>
<keyword id="KW-1185">Reference proteome</keyword>
<keyword id="KW-0687">Ribonucleoprotein</keyword>
<keyword id="KW-0689">Ribosomal protein</keyword>
<keyword id="KW-0694">RNA-binding</keyword>
<keyword id="KW-0699">rRNA-binding</keyword>
<accession>Q5F5U0</accession>
<gene>
    <name evidence="1" type="primary">rpsN</name>
    <name type="ordered locus">NGO_18261</name>
</gene>
<reference key="1">
    <citation type="submission" date="2003-03" db="EMBL/GenBank/DDBJ databases">
        <title>The complete genome sequence of Neisseria gonorrhoeae.</title>
        <authorList>
            <person name="Lewis L.A."/>
            <person name="Gillaspy A.F."/>
            <person name="McLaughlin R.E."/>
            <person name="Gipson M."/>
            <person name="Ducey T.F."/>
            <person name="Ownbey T."/>
            <person name="Hartman K."/>
            <person name="Nydick C."/>
            <person name="Carson M.B."/>
            <person name="Vaughn J."/>
            <person name="Thomson C."/>
            <person name="Song L."/>
            <person name="Lin S."/>
            <person name="Yuan X."/>
            <person name="Najar F."/>
            <person name="Zhan M."/>
            <person name="Ren Q."/>
            <person name="Zhu H."/>
            <person name="Qi S."/>
            <person name="Kenton S.M."/>
            <person name="Lai H."/>
            <person name="White J.D."/>
            <person name="Clifton S."/>
            <person name="Roe B.A."/>
            <person name="Dyer D.W."/>
        </authorList>
    </citation>
    <scope>NUCLEOTIDE SEQUENCE [LARGE SCALE GENOMIC DNA]</scope>
    <source>
        <strain>ATCC 700825 / FA 1090</strain>
    </source>
</reference>
<dbReference type="EMBL" id="AE004969">
    <property type="protein sequence ID" value="AAW90447.1"/>
    <property type="molecule type" value="Genomic_DNA"/>
</dbReference>
<dbReference type="RefSeq" id="WP_002216244.1">
    <property type="nucleotide sequence ID" value="NC_002946.2"/>
</dbReference>
<dbReference type="RefSeq" id="YP_208859.1">
    <property type="nucleotide sequence ID" value="NC_002946.2"/>
</dbReference>
<dbReference type="SMR" id="Q5F5U0"/>
<dbReference type="STRING" id="242231.NGO_18261"/>
<dbReference type="GeneID" id="93387230"/>
<dbReference type="KEGG" id="ngo:NGO_18261"/>
<dbReference type="PATRIC" id="fig|242231.10.peg.2196"/>
<dbReference type="HOGENOM" id="CLU_139869_0_1_4"/>
<dbReference type="Proteomes" id="UP000000535">
    <property type="component" value="Chromosome"/>
</dbReference>
<dbReference type="GO" id="GO:0005737">
    <property type="term" value="C:cytoplasm"/>
    <property type="evidence" value="ECO:0007669"/>
    <property type="project" value="UniProtKB-ARBA"/>
</dbReference>
<dbReference type="GO" id="GO:0015935">
    <property type="term" value="C:small ribosomal subunit"/>
    <property type="evidence" value="ECO:0007669"/>
    <property type="project" value="TreeGrafter"/>
</dbReference>
<dbReference type="GO" id="GO:0019843">
    <property type="term" value="F:rRNA binding"/>
    <property type="evidence" value="ECO:0007669"/>
    <property type="project" value="UniProtKB-UniRule"/>
</dbReference>
<dbReference type="GO" id="GO:0003735">
    <property type="term" value="F:structural constituent of ribosome"/>
    <property type="evidence" value="ECO:0007669"/>
    <property type="project" value="InterPro"/>
</dbReference>
<dbReference type="GO" id="GO:0006412">
    <property type="term" value="P:translation"/>
    <property type="evidence" value="ECO:0007669"/>
    <property type="project" value="UniProtKB-UniRule"/>
</dbReference>
<dbReference type="FunFam" id="1.10.287.1480:FF:000001">
    <property type="entry name" value="30S ribosomal protein S14"/>
    <property type="match status" value="1"/>
</dbReference>
<dbReference type="Gene3D" id="1.10.287.1480">
    <property type="match status" value="1"/>
</dbReference>
<dbReference type="HAMAP" id="MF_00537">
    <property type="entry name" value="Ribosomal_uS14_1"/>
    <property type="match status" value="1"/>
</dbReference>
<dbReference type="InterPro" id="IPR001209">
    <property type="entry name" value="Ribosomal_uS14"/>
</dbReference>
<dbReference type="InterPro" id="IPR023036">
    <property type="entry name" value="Ribosomal_uS14_bac/plastid"/>
</dbReference>
<dbReference type="NCBIfam" id="NF006477">
    <property type="entry name" value="PRK08881.1"/>
    <property type="match status" value="1"/>
</dbReference>
<dbReference type="PANTHER" id="PTHR19836">
    <property type="entry name" value="30S RIBOSOMAL PROTEIN S14"/>
    <property type="match status" value="1"/>
</dbReference>
<dbReference type="PANTHER" id="PTHR19836:SF19">
    <property type="entry name" value="SMALL RIBOSOMAL SUBUNIT PROTEIN US14M"/>
    <property type="match status" value="1"/>
</dbReference>
<dbReference type="Pfam" id="PF00253">
    <property type="entry name" value="Ribosomal_S14"/>
    <property type="match status" value="1"/>
</dbReference>
<dbReference type="SUPFAM" id="SSF57716">
    <property type="entry name" value="Glucocorticoid receptor-like (DNA-binding domain)"/>
    <property type="match status" value="1"/>
</dbReference>
<sequence length="101" mass="11518">MAKKALINRDLKRQALAKKYAAKRAAIKAVINDSNATEEERFEARLRFQSIPRNAAPVRQRRRCALTGRPRGTFRKFGLGRIKIREIAMRGEIPGVVKASW</sequence>